<protein>
    <recommendedName>
        <fullName>Proteasome activator complex subunit 3</fullName>
    </recommendedName>
    <alternativeName>
        <fullName>Activator of multicatalytic protease subunit 3</fullName>
    </alternativeName>
    <alternativeName>
        <fullName>Proteasome activator 28 subunit gamma</fullName>
        <shortName>PA28g</shortName>
        <shortName>PA28gamma</shortName>
    </alternativeName>
</protein>
<organism>
    <name type="scientific">Sus scrofa</name>
    <name type="common">Pig</name>
    <dbReference type="NCBI Taxonomy" id="9823"/>
    <lineage>
        <taxon>Eukaryota</taxon>
        <taxon>Metazoa</taxon>
        <taxon>Chordata</taxon>
        <taxon>Craniata</taxon>
        <taxon>Vertebrata</taxon>
        <taxon>Euteleostomi</taxon>
        <taxon>Mammalia</taxon>
        <taxon>Eutheria</taxon>
        <taxon>Laurasiatheria</taxon>
        <taxon>Artiodactyla</taxon>
        <taxon>Suina</taxon>
        <taxon>Suidae</taxon>
        <taxon>Sus</taxon>
    </lineage>
</organism>
<name>PSME3_PIG</name>
<keyword id="KW-0007">Acetylation</keyword>
<keyword id="KW-0053">Apoptosis</keyword>
<keyword id="KW-0131">Cell cycle</keyword>
<keyword id="KW-0963">Cytoplasm</keyword>
<keyword id="KW-0539">Nucleus</keyword>
<keyword id="KW-0597">Phosphoprotein</keyword>
<keyword id="KW-0647">Proteasome</keyword>
<keyword id="KW-1185">Reference proteome</keyword>
<reference key="1">
    <citation type="journal article" date="2004" name="J. Anim. Breed. Genet.">
        <title>Investigation of the porcine PA28 activator gamma-subunit (PSME3) gene: isolation, polymorphism and its chromosomal localization.</title>
        <authorList>
            <person name="Yu M."/>
            <person name="Wang Y.F."/>
            <person name="te Pas M.F.W."/>
            <person name="Yerle M."/>
            <person name="Liu B."/>
            <person name="Fan B."/>
            <person name="Xiong T.A."/>
            <person name="Li K."/>
        </authorList>
    </citation>
    <scope>NUCLEOTIDE SEQUENCE [MRNA]</scope>
</reference>
<gene>
    <name type="primary">PSME3</name>
</gene>
<dbReference type="EMBL" id="AY134854">
    <property type="protein sequence ID" value="AAN85724.1"/>
    <property type="molecule type" value="mRNA"/>
</dbReference>
<dbReference type="RefSeq" id="NP_999513.1">
    <property type="nucleotide sequence ID" value="NM_214348.1"/>
</dbReference>
<dbReference type="RefSeq" id="XP_020921907.1">
    <property type="nucleotide sequence ID" value="XM_021066248.1"/>
</dbReference>
<dbReference type="SMR" id="P61291"/>
<dbReference type="FunCoup" id="P61291">
    <property type="interactions" value="3238"/>
</dbReference>
<dbReference type="STRING" id="9823.ENSSSCP00000071458"/>
<dbReference type="GlyGen" id="P61291">
    <property type="glycosylation" value="1 site"/>
</dbReference>
<dbReference type="PaxDb" id="9823-ENSSSCP00000018419"/>
<dbReference type="PeptideAtlas" id="P61291"/>
<dbReference type="Ensembl" id="ENSSSCT00015101976.1">
    <property type="protein sequence ID" value="ENSSSCP00015042260.1"/>
    <property type="gene ID" value="ENSSSCG00015075406.1"/>
</dbReference>
<dbReference type="Ensembl" id="ENSSSCT00025073910.1">
    <property type="protein sequence ID" value="ENSSSCP00025031977.1"/>
    <property type="gene ID" value="ENSSSCG00025054060.1"/>
</dbReference>
<dbReference type="Ensembl" id="ENSSSCT00030101041.1">
    <property type="protein sequence ID" value="ENSSSCP00030046615.1"/>
    <property type="gene ID" value="ENSSSCG00030072129.1"/>
</dbReference>
<dbReference type="Ensembl" id="ENSSSCT00035016657.1">
    <property type="protein sequence ID" value="ENSSSCP00035005766.1"/>
    <property type="gene ID" value="ENSSSCG00035013193.1"/>
</dbReference>
<dbReference type="Ensembl" id="ENSSSCT00040034358.1">
    <property type="protein sequence ID" value="ENSSSCP00040014175.1"/>
    <property type="gene ID" value="ENSSSCG00040025703.1"/>
</dbReference>
<dbReference type="Ensembl" id="ENSSSCT00045012433.1">
    <property type="protein sequence ID" value="ENSSSCP00045008513.1"/>
    <property type="gene ID" value="ENSSSCG00045007466.1"/>
</dbReference>
<dbReference type="Ensembl" id="ENSSSCT00050082721.1">
    <property type="protein sequence ID" value="ENSSSCP00050035493.1"/>
    <property type="gene ID" value="ENSSSCG00050060716.1"/>
</dbReference>
<dbReference type="Ensembl" id="ENSSSCT00055049510.1">
    <property type="protein sequence ID" value="ENSSSCP00055039570.1"/>
    <property type="gene ID" value="ENSSSCG00055025037.1"/>
</dbReference>
<dbReference type="Ensembl" id="ENSSSCT00060057729.1">
    <property type="protein sequence ID" value="ENSSSCP00060024698.1"/>
    <property type="gene ID" value="ENSSSCG00060042579.1"/>
</dbReference>
<dbReference type="Ensembl" id="ENSSSCT00065004165.1">
    <property type="protein sequence ID" value="ENSSSCP00065001682.1"/>
    <property type="gene ID" value="ENSSSCG00065003129.1"/>
</dbReference>
<dbReference type="Ensembl" id="ENSSSCT00070024466.1">
    <property type="protein sequence ID" value="ENSSSCP00070020248.1"/>
    <property type="gene ID" value="ENSSSCG00070012475.1"/>
</dbReference>
<dbReference type="Ensembl" id="ENSSSCT00085010810">
    <property type="protein sequence ID" value="ENSSSCP00085007694"/>
    <property type="gene ID" value="ENSSSCG00085005734"/>
</dbReference>
<dbReference type="Ensembl" id="ENSSSCT00090008946">
    <property type="protein sequence ID" value="ENSSSCP00090005363"/>
    <property type="gene ID" value="ENSSSCG00090005104"/>
</dbReference>
<dbReference type="Ensembl" id="ENSSSCT00105056289">
    <property type="protein sequence ID" value="ENSSSCP00105039707"/>
    <property type="gene ID" value="ENSSSCG00105029297"/>
</dbReference>
<dbReference type="Ensembl" id="ENSSSCT00110040033">
    <property type="protein sequence ID" value="ENSSSCP00110027850"/>
    <property type="gene ID" value="ENSSSCG00110020723"/>
</dbReference>
<dbReference type="Ensembl" id="ENSSSCT00115038394">
    <property type="protein sequence ID" value="ENSSSCP00115036245"/>
    <property type="gene ID" value="ENSSSCG00115021667"/>
</dbReference>
<dbReference type="Ensembl" id="ENSSSCT00130012525">
    <property type="protein sequence ID" value="ENSSSCP00130008182"/>
    <property type="gene ID" value="ENSSSCG00130006899"/>
</dbReference>
<dbReference type="GeneID" id="397625"/>
<dbReference type="KEGG" id="ssc:397625"/>
<dbReference type="CTD" id="10197"/>
<dbReference type="eggNOG" id="KOG4470">
    <property type="taxonomic scope" value="Eukaryota"/>
</dbReference>
<dbReference type="HOGENOM" id="CLU_062515_1_0_1"/>
<dbReference type="InParanoid" id="P61291"/>
<dbReference type="OMA" id="PMFNERN"/>
<dbReference type="OrthoDB" id="6591885at2759"/>
<dbReference type="TreeFam" id="TF106236"/>
<dbReference type="Reactome" id="R-SSC-9907900">
    <property type="pathway name" value="Proteasome assembly"/>
</dbReference>
<dbReference type="Proteomes" id="UP000008227">
    <property type="component" value="Unplaced"/>
</dbReference>
<dbReference type="Proteomes" id="UP000314985">
    <property type="component" value="Chromosome 12"/>
</dbReference>
<dbReference type="Proteomes" id="UP000694570">
    <property type="component" value="Unplaced"/>
</dbReference>
<dbReference type="Proteomes" id="UP000694571">
    <property type="component" value="Unplaced"/>
</dbReference>
<dbReference type="Proteomes" id="UP000694720">
    <property type="component" value="Unplaced"/>
</dbReference>
<dbReference type="Proteomes" id="UP000694722">
    <property type="component" value="Unplaced"/>
</dbReference>
<dbReference type="Proteomes" id="UP000694723">
    <property type="component" value="Unplaced"/>
</dbReference>
<dbReference type="Proteomes" id="UP000694724">
    <property type="component" value="Unplaced"/>
</dbReference>
<dbReference type="Proteomes" id="UP000694725">
    <property type="component" value="Unplaced"/>
</dbReference>
<dbReference type="Proteomes" id="UP000694726">
    <property type="component" value="Unplaced"/>
</dbReference>
<dbReference type="Proteomes" id="UP000694727">
    <property type="component" value="Unplaced"/>
</dbReference>
<dbReference type="Proteomes" id="UP000694728">
    <property type="component" value="Unplaced"/>
</dbReference>
<dbReference type="Bgee" id="ENSSSCG00000017385">
    <property type="expression patterns" value="Expressed in hindlimb bud and 44 other cell types or tissues"/>
</dbReference>
<dbReference type="ExpressionAtlas" id="P61291">
    <property type="expression patterns" value="baseline and differential"/>
</dbReference>
<dbReference type="GO" id="GO:0005737">
    <property type="term" value="C:cytoplasm"/>
    <property type="evidence" value="ECO:0000318"/>
    <property type="project" value="GO_Central"/>
</dbReference>
<dbReference type="GO" id="GO:0005654">
    <property type="term" value="C:nucleoplasm"/>
    <property type="evidence" value="ECO:0000318"/>
    <property type="project" value="GO_Central"/>
</dbReference>
<dbReference type="GO" id="GO:0008537">
    <property type="term" value="C:proteasome activator complex"/>
    <property type="evidence" value="ECO:0007669"/>
    <property type="project" value="InterPro"/>
</dbReference>
<dbReference type="GO" id="GO:0061133">
    <property type="term" value="F:endopeptidase activator activity"/>
    <property type="evidence" value="ECO:0000318"/>
    <property type="project" value="GO_Central"/>
</dbReference>
<dbReference type="GO" id="GO:0097371">
    <property type="term" value="F:MDM2/MDM4 family protein binding"/>
    <property type="evidence" value="ECO:0000250"/>
    <property type="project" value="UniProtKB"/>
</dbReference>
<dbReference type="GO" id="GO:0002039">
    <property type="term" value="F:p53 binding"/>
    <property type="evidence" value="ECO:0000250"/>
    <property type="project" value="UniProtKB"/>
</dbReference>
<dbReference type="GO" id="GO:0006915">
    <property type="term" value="P:apoptotic process"/>
    <property type="evidence" value="ECO:0007669"/>
    <property type="project" value="UniProtKB-KW"/>
</dbReference>
<dbReference type="GO" id="GO:2001237">
    <property type="term" value="P:negative regulation of extrinsic apoptotic signaling pathway"/>
    <property type="evidence" value="ECO:0000250"/>
    <property type="project" value="UniProtKB"/>
</dbReference>
<dbReference type="GO" id="GO:2000045">
    <property type="term" value="P:regulation of G1/S transition of mitotic cell cycle"/>
    <property type="evidence" value="ECO:0000318"/>
    <property type="project" value="GO_Central"/>
</dbReference>
<dbReference type="GO" id="GO:0061136">
    <property type="term" value="P:regulation of proteasomal protein catabolic process"/>
    <property type="evidence" value="ECO:0000318"/>
    <property type="project" value="GO_Central"/>
</dbReference>
<dbReference type="FunFam" id="1.20.120.180:FF:000001">
    <property type="entry name" value="Proteasome activator complex subunit 3"/>
    <property type="match status" value="1"/>
</dbReference>
<dbReference type="FunFam" id="1.20.5.120:FF:000001">
    <property type="entry name" value="Proteasome activator complex subunit 3"/>
    <property type="match status" value="1"/>
</dbReference>
<dbReference type="Gene3D" id="1.20.120.180">
    <property type="entry name" value="Proteasome activator pa28, C-terminal domain"/>
    <property type="match status" value="1"/>
</dbReference>
<dbReference type="Gene3D" id="1.20.5.120">
    <property type="entry name" value="Proteasome activator pa28, N-terminal domain"/>
    <property type="match status" value="1"/>
</dbReference>
<dbReference type="InterPro" id="IPR003186">
    <property type="entry name" value="PA28_C"/>
</dbReference>
<dbReference type="InterPro" id="IPR036997">
    <property type="entry name" value="PA28_C_sf"/>
</dbReference>
<dbReference type="InterPro" id="IPR036996">
    <property type="entry name" value="PA28_N_sf"/>
</dbReference>
<dbReference type="InterPro" id="IPR009077">
    <property type="entry name" value="Proteasome_activ_PA28"/>
</dbReference>
<dbReference type="InterPro" id="IPR003185">
    <property type="entry name" value="Proteasome_activ_PA28_N"/>
</dbReference>
<dbReference type="InterPro" id="IPR036252">
    <property type="entry name" value="Proteasome_activ_sf"/>
</dbReference>
<dbReference type="PANTHER" id="PTHR10660:SF4">
    <property type="entry name" value="PROTEASOME ACTIVATOR COMPLEX SUBUNIT 3"/>
    <property type="match status" value="1"/>
</dbReference>
<dbReference type="PANTHER" id="PTHR10660">
    <property type="entry name" value="PROTEASOME REGULATOR PA28"/>
    <property type="match status" value="1"/>
</dbReference>
<dbReference type="Pfam" id="PF02252">
    <property type="entry name" value="PA28_C"/>
    <property type="match status" value="1"/>
</dbReference>
<dbReference type="Pfam" id="PF02251">
    <property type="entry name" value="PA28_N"/>
    <property type="match status" value="1"/>
</dbReference>
<dbReference type="SUPFAM" id="SSF47216">
    <property type="entry name" value="Proteasome activator"/>
    <property type="match status" value="1"/>
</dbReference>
<comment type="function">
    <text evidence="2">Subunit of the 11S REG-gamma (also called PA28-gamma) proteasome regulator, a doughnut-shaped homoheptamer which associates with the proteasome. 11S REG-gamma activates the trypsin-like catalytic subunit of the proteasome but inhibits the chymotrypsin-like and postglutamyl-preferring (PGPH) subunits. Facilitates the MDM2-p53/TP53 interaction which promotes ubiquitination- and MDM2-dependent proteasomal degradation of p53/TP53, limiting its accumulation and resulting in inhibited apoptosis after DNA damage. May also be involved in cell cycle regulation. Mediates CCAR2 and CHEK2-dependent SIRT1 inhibition (By similarity).</text>
</comment>
<comment type="subunit">
    <text evidence="2 3">Homoheptamer; the stability of the heptamer is essential for the specific activation of the trypsine-like subunit and inhibition of the chymotrypsin-like and postglutamyl-preferring (PGPH) subunits of the proteasome. Interacts with p53/TP53, MDM2 and MAP3K3. Associates with the proteasome. Interacts with CCAR2. Interacts with PSME3IP1 (via C-terminus); the interaction is direct and promotes the association of PSME3 with the 20S proteasome. Interacts with COIL; the interaction is inhibited by PSME3IP1.</text>
</comment>
<comment type="subcellular location">
    <subcellularLocation>
        <location evidence="1">Nucleus</location>
    </subcellularLocation>
    <subcellularLocation>
        <location evidence="1">Cytoplasm</location>
    </subcellularLocation>
    <text evidence="1">Localizes to the cytoplasm during mitosis following nuclear envelope breakdown at this distinct stage of the cell cycle which allows its interaction with MAP3K3 kinase.</text>
</comment>
<comment type="domain">
    <text evidence="1">The C-terminal sequences affect heptamer stability and proteasome affinity.</text>
</comment>
<comment type="PTM">
    <text evidence="2 3">Phosphorylated by MAP3K3. Phosphorylation at Ser-247 promotes its association with CCAR2.</text>
</comment>
<comment type="PTM">
    <text evidence="1">Acetylation at the major site Lys-195 is important for oligomerization and ability to degrade its target substrates. Deacetylated by SIRT1 (By similarity).</text>
</comment>
<comment type="similarity">
    <text evidence="4">Belongs to the PA28 family.</text>
</comment>
<proteinExistence type="evidence at transcript level"/>
<accession>P61291</accession>
<evidence type="ECO:0000250" key="1"/>
<evidence type="ECO:0000250" key="2">
    <source>
        <dbReference type="UniProtKB" id="P61289"/>
    </source>
</evidence>
<evidence type="ECO:0000250" key="3">
    <source>
        <dbReference type="UniProtKB" id="P61290"/>
    </source>
</evidence>
<evidence type="ECO:0000305" key="4"/>
<sequence>MASLLKVDQEVKLKVDSFRERITSEAEDLVANFFPKKLLELDSFLKEPILNIHDLTQIHSDMNLPVPDPILLTNSHDGLDGPTYKKRRLDECEEAFQGTKVFVMPNGMLKSNQQLVDIIEKVKPEIRLLIEKCNTVKMWVQLLIPRIEDGNNFGVSIQEETVAELRTVESEAASYLDQISRYYITRAKLVSKIAKYPHVEDYRRTVTEIDEKEYISLRLIISELRNQYVTLHDMILKNIEKIKRPRSSNAETLY</sequence>
<feature type="initiator methionine" description="Removed" evidence="2">
    <location>
        <position position="1"/>
    </location>
</feature>
<feature type="chain" id="PRO_0000161791" description="Proteasome activator complex subunit 3">
    <location>
        <begin position="2"/>
        <end position="254"/>
    </location>
</feature>
<feature type="modified residue" description="N-acetylalanine" evidence="2">
    <location>
        <position position="2"/>
    </location>
</feature>
<feature type="modified residue" description="Phosphoserine" evidence="2">
    <location>
        <position position="17"/>
    </location>
</feature>
<feature type="modified residue" description="Phosphoserine" evidence="2">
    <location>
        <position position="24"/>
    </location>
</feature>
<feature type="modified residue" description="N6-acetyllysine; by P300/CBP" evidence="2">
    <location>
        <position position="195"/>
    </location>
</feature>
<feature type="modified residue" description="Phosphoserine; by CHEK2" evidence="2">
    <location>
        <position position="247"/>
    </location>
</feature>